<organism>
    <name type="scientific">Homo sapiens</name>
    <name type="common">Human</name>
    <dbReference type="NCBI Taxonomy" id="9606"/>
    <lineage>
        <taxon>Eukaryota</taxon>
        <taxon>Metazoa</taxon>
        <taxon>Chordata</taxon>
        <taxon>Craniata</taxon>
        <taxon>Vertebrata</taxon>
        <taxon>Euteleostomi</taxon>
        <taxon>Mammalia</taxon>
        <taxon>Eutheria</taxon>
        <taxon>Euarchontoglires</taxon>
        <taxon>Primates</taxon>
        <taxon>Haplorrhini</taxon>
        <taxon>Catarrhini</taxon>
        <taxon>Hominidae</taxon>
        <taxon>Homo</taxon>
    </lineage>
</organism>
<accession>Q6ZNA4</accession>
<accession>C9JUS4</accession>
<accession>H0YN55</accession>
<accession>Q6P9A4</accession>
<accession>Q6ZMU2</accession>
<accession>Q7L428</accession>
<accession>Q7Z346</accession>
<accession>Q8N1P9</accession>
<accession>Q8WUA3</accession>
<accession>Q9NSR1</accession>
<evidence type="ECO:0000250" key="1">
    <source>
        <dbReference type="UniProtKB" id="Q6ZSG1"/>
    </source>
</evidence>
<evidence type="ECO:0000250" key="2">
    <source>
        <dbReference type="UniProtKB" id="Q99ML9"/>
    </source>
</evidence>
<evidence type="ECO:0000255" key="3">
    <source>
        <dbReference type="PROSITE-ProRule" id="PRU00175"/>
    </source>
</evidence>
<evidence type="ECO:0000256" key="4">
    <source>
        <dbReference type="SAM" id="MobiDB-lite"/>
    </source>
</evidence>
<evidence type="ECO:0000269" key="5">
    <source>
    </source>
</evidence>
<evidence type="ECO:0000269" key="6">
    <source>
    </source>
</evidence>
<evidence type="ECO:0000269" key="7">
    <source>
    </source>
</evidence>
<evidence type="ECO:0000269" key="8">
    <source>
    </source>
</evidence>
<evidence type="ECO:0000269" key="9">
    <source>
    </source>
</evidence>
<evidence type="ECO:0000269" key="10">
    <source>
    </source>
</evidence>
<evidence type="ECO:0000269" key="11">
    <source>
    </source>
</evidence>
<evidence type="ECO:0000269" key="12">
    <source>
    </source>
</evidence>
<evidence type="ECO:0000269" key="13">
    <source>
    </source>
</evidence>
<evidence type="ECO:0000269" key="14">
    <source>
    </source>
</evidence>
<evidence type="ECO:0000303" key="15">
    <source>
    </source>
</evidence>
<evidence type="ECO:0000303" key="16">
    <source>
    </source>
</evidence>
<evidence type="ECO:0000303" key="17">
    <source>
    </source>
</evidence>
<evidence type="ECO:0000303" key="18">
    <source>
    </source>
</evidence>
<evidence type="ECO:0000305" key="19"/>
<evidence type="ECO:0000305" key="20">
    <source>
    </source>
</evidence>
<evidence type="ECO:0000305" key="21">
    <source>
    </source>
</evidence>
<evidence type="ECO:0000312" key="22">
    <source>
        <dbReference type="HGNC" id="HGNC:17384"/>
    </source>
</evidence>
<evidence type="ECO:0007744" key="23">
    <source>
    </source>
</evidence>
<evidence type="ECO:0007744" key="24">
    <source>
    </source>
</evidence>
<evidence type="ECO:0007829" key="25">
    <source>
        <dbReference type="PDB" id="2KIZ"/>
    </source>
</evidence>
<evidence type="ECO:0007829" key="26">
    <source>
        <dbReference type="PDB" id="5LG0"/>
    </source>
</evidence>
<dbReference type="EC" id="2.3.2.27" evidence="13"/>
<dbReference type="EMBL" id="AK095327">
    <property type="protein sequence ID" value="BAC04531.1"/>
    <property type="status" value="ALT_INIT"/>
    <property type="molecule type" value="mRNA"/>
</dbReference>
<dbReference type="EMBL" id="AK131304">
    <property type="protein sequence ID" value="BAD18471.1"/>
    <property type="molecule type" value="mRNA"/>
</dbReference>
<dbReference type="EMBL" id="AK131488">
    <property type="protein sequence ID" value="BAD18633.1"/>
    <property type="status" value="ALT_INIT"/>
    <property type="molecule type" value="mRNA"/>
</dbReference>
<dbReference type="EMBL" id="AL157474">
    <property type="protein sequence ID" value="CAB75669.2"/>
    <property type="molecule type" value="mRNA"/>
</dbReference>
<dbReference type="EMBL" id="BX538130">
    <property type="protein sequence ID" value="CAD98031.1"/>
    <property type="molecule type" value="mRNA"/>
</dbReference>
<dbReference type="EMBL" id="BX647259">
    <property type="status" value="NOT_ANNOTATED_CDS"/>
    <property type="molecule type" value="mRNA"/>
</dbReference>
<dbReference type="EMBL" id="AC025918">
    <property type="status" value="NOT_ANNOTATED_CDS"/>
    <property type="molecule type" value="Genomic_DNA"/>
</dbReference>
<dbReference type="EMBL" id="AC090515">
    <property type="status" value="NOT_ANNOTATED_CDS"/>
    <property type="molecule type" value="Genomic_DNA"/>
</dbReference>
<dbReference type="EMBL" id="AC092757">
    <property type="status" value="NOT_ANNOTATED_CDS"/>
    <property type="molecule type" value="Genomic_DNA"/>
</dbReference>
<dbReference type="EMBL" id="CH471082">
    <property type="protein sequence ID" value="EAW77561.1"/>
    <property type="molecule type" value="Genomic_DNA"/>
</dbReference>
<dbReference type="EMBL" id="BC010369">
    <property type="protein sequence ID" value="AAH10369.1"/>
    <property type="status" value="ALT_INIT"/>
    <property type="molecule type" value="mRNA"/>
</dbReference>
<dbReference type="EMBL" id="BC020984">
    <property type="protein sequence ID" value="AAH20984.1"/>
    <property type="molecule type" value="mRNA"/>
</dbReference>
<dbReference type="EMBL" id="BC060862">
    <property type="protein sequence ID" value="AAH60862.1"/>
    <property type="molecule type" value="mRNA"/>
</dbReference>
<dbReference type="CCDS" id="CCDS10169.1">
    <molecule id="Q6ZNA4-2"/>
</dbReference>
<dbReference type="CCDS" id="CCDS58365.1">
    <molecule id="Q6ZNA4-4"/>
</dbReference>
<dbReference type="CCDS" id="CCDS58366.1">
    <molecule id="Q6ZNA4-1"/>
</dbReference>
<dbReference type="CCDS" id="CCDS81888.1">
    <molecule id="Q6ZNA4-3"/>
</dbReference>
<dbReference type="PIR" id="T46904">
    <property type="entry name" value="T46904"/>
</dbReference>
<dbReference type="RefSeq" id="NP_001257457.1">
    <molecule id="Q6ZNA4-4"/>
    <property type="nucleotide sequence ID" value="NM_001270528.2"/>
</dbReference>
<dbReference type="RefSeq" id="NP_001257458.1">
    <property type="nucleotide sequence ID" value="NM_001270529.1"/>
</dbReference>
<dbReference type="RefSeq" id="NP_001257459.1">
    <molecule id="Q6ZNA4-1"/>
    <property type="nucleotide sequence ID" value="NM_001270530.2"/>
</dbReference>
<dbReference type="RefSeq" id="NP_001317260.1">
    <molecule id="Q6ZNA4-3"/>
    <property type="nucleotide sequence ID" value="NM_001330331.2"/>
</dbReference>
<dbReference type="RefSeq" id="NP_060080.6">
    <molecule id="Q6ZNA4-2"/>
    <property type="nucleotide sequence ID" value="NM_017610.7"/>
</dbReference>
<dbReference type="RefSeq" id="XP_006720642.1">
    <property type="nucleotide sequence ID" value="XM_006720579.3"/>
</dbReference>
<dbReference type="RefSeq" id="XP_016877827.1">
    <property type="nucleotide sequence ID" value="XM_017022338.1"/>
</dbReference>
<dbReference type="RefSeq" id="XP_016877831.1">
    <property type="nucleotide sequence ID" value="XM_017022342.1"/>
</dbReference>
<dbReference type="PDB" id="2KIZ">
    <property type="method" value="NMR"/>
    <property type="chains" value="A=927-994"/>
</dbReference>
<dbReference type="PDB" id="5LG0">
    <property type="method" value="NMR"/>
    <property type="chains" value="A=927-994"/>
</dbReference>
<dbReference type="PDB" id="5LG7">
    <property type="method" value="NMR"/>
    <property type="chains" value="A=927-994"/>
</dbReference>
<dbReference type="PDB" id="7P2K">
    <property type="method" value="NMR"/>
    <property type="chains" value="A=927-994"/>
</dbReference>
<dbReference type="PDBsum" id="2KIZ"/>
<dbReference type="PDBsum" id="5LG0"/>
<dbReference type="PDBsum" id="5LG7"/>
<dbReference type="PDBsum" id="7P2K"/>
<dbReference type="BMRB" id="Q6ZNA4"/>
<dbReference type="SMR" id="Q6ZNA4"/>
<dbReference type="BioGRID" id="120146">
    <property type="interactions" value="103"/>
</dbReference>
<dbReference type="FunCoup" id="Q6ZNA4">
    <property type="interactions" value="4904"/>
</dbReference>
<dbReference type="IntAct" id="Q6ZNA4">
    <property type="interactions" value="76"/>
</dbReference>
<dbReference type="MINT" id="Q6ZNA4"/>
<dbReference type="STRING" id="9606.ENSP00000453015"/>
<dbReference type="MoonDB" id="Q6ZNA4">
    <property type="type" value="Predicted"/>
</dbReference>
<dbReference type="GlyGen" id="Q6ZNA4">
    <property type="glycosylation" value="1 site, 1 O-linked glycan (1 site)"/>
</dbReference>
<dbReference type="iPTMnet" id="Q6ZNA4"/>
<dbReference type="PhosphoSitePlus" id="Q6ZNA4"/>
<dbReference type="BioMuta" id="RNF111"/>
<dbReference type="DMDM" id="308153555"/>
<dbReference type="jPOST" id="Q6ZNA4"/>
<dbReference type="MassIVE" id="Q6ZNA4"/>
<dbReference type="PaxDb" id="9606-ENSP00000453872"/>
<dbReference type="PeptideAtlas" id="Q6ZNA4"/>
<dbReference type="ProteomicsDB" id="40461"/>
<dbReference type="ProteomicsDB" id="68002">
    <molecule id="Q6ZNA4-1"/>
</dbReference>
<dbReference type="ProteomicsDB" id="68003">
    <molecule id="Q6ZNA4-2"/>
</dbReference>
<dbReference type="ProteomicsDB" id="68004">
    <molecule id="Q6ZNA4-3"/>
</dbReference>
<dbReference type="Antibodypedia" id="25360">
    <property type="antibodies" value="132 antibodies from 26 providers"/>
</dbReference>
<dbReference type="DNASU" id="54778"/>
<dbReference type="Ensembl" id="ENST00000348370.9">
    <molecule id="Q6ZNA4-2"/>
    <property type="protein sequence ID" value="ENSP00000288199.5"/>
    <property type="gene ID" value="ENSG00000157450.16"/>
</dbReference>
<dbReference type="Ensembl" id="ENST00000557998.5">
    <molecule id="Q6ZNA4-1"/>
    <property type="protein sequence ID" value="ENSP00000452732.1"/>
    <property type="gene ID" value="ENSG00000157450.16"/>
</dbReference>
<dbReference type="Ensembl" id="ENST00000559209.5">
    <molecule id="Q6ZNA4-4"/>
    <property type="protein sequence ID" value="ENSP00000453872.1"/>
    <property type="gene ID" value="ENSG00000157450.16"/>
</dbReference>
<dbReference type="Ensembl" id="ENST00000561186.5">
    <molecule id="Q6ZNA4-3"/>
    <property type="protein sequence ID" value="ENSP00000453015.1"/>
    <property type="gene ID" value="ENSG00000157450.16"/>
</dbReference>
<dbReference type="GeneID" id="54778"/>
<dbReference type="KEGG" id="hsa:54778"/>
<dbReference type="MANE-Select" id="ENST00000348370.9">
    <molecule id="Q6ZNA4-2"/>
    <property type="protein sequence ID" value="ENSP00000288199.5"/>
    <property type="RefSeq nucleotide sequence ID" value="NM_017610.8"/>
    <property type="RefSeq protein sequence ID" value="NP_060080.6"/>
</dbReference>
<dbReference type="UCSC" id="uc002afs.5">
    <molecule id="Q6ZNA4-1"/>
    <property type="organism name" value="human"/>
</dbReference>
<dbReference type="AGR" id="HGNC:17384"/>
<dbReference type="CTD" id="54778"/>
<dbReference type="DisGeNET" id="54778"/>
<dbReference type="GeneCards" id="RNF111"/>
<dbReference type="HGNC" id="HGNC:17384">
    <property type="gene designation" value="RNF111"/>
</dbReference>
<dbReference type="HPA" id="ENSG00000157450">
    <property type="expression patterns" value="Low tissue specificity"/>
</dbReference>
<dbReference type="MIM" id="605840">
    <property type="type" value="gene"/>
</dbReference>
<dbReference type="neXtProt" id="NX_Q6ZNA4"/>
<dbReference type="OpenTargets" id="ENSG00000157450"/>
<dbReference type="PharmGKB" id="PA134868772"/>
<dbReference type="VEuPathDB" id="HostDB:ENSG00000157450"/>
<dbReference type="eggNOG" id="KOG0800">
    <property type="taxonomic scope" value="Eukaryota"/>
</dbReference>
<dbReference type="GeneTree" id="ENSGT00940000157691"/>
<dbReference type="HOGENOM" id="CLU_309031_0_0_1"/>
<dbReference type="InParanoid" id="Q6ZNA4"/>
<dbReference type="OMA" id="HTNRPQE"/>
<dbReference type="OrthoDB" id="8062037at2759"/>
<dbReference type="PAN-GO" id="Q6ZNA4">
    <property type="GO annotations" value="8 GO annotations based on evolutionary models"/>
</dbReference>
<dbReference type="PhylomeDB" id="Q6ZNA4"/>
<dbReference type="TreeFam" id="TF331862"/>
<dbReference type="BRENDA" id="2.3.2.27">
    <property type="organism ID" value="2681"/>
</dbReference>
<dbReference type="PathwayCommons" id="Q6ZNA4"/>
<dbReference type="Reactome" id="R-HSA-2173795">
    <property type="pathway name" value="Downregulation of SMAD2/3:SMAD4 transcriptional activity"/>
</dbReference>
<dbReference type="Reactome" id="R-HSA-2173796">
    <property type="pathway name" value="SMAD2/SMAD3:SMAD4 heterotrimer regulates transcription"/>
</dbReference>
<dbReference type="Reactome" id="R-HSA-5696395">
    <property type="pathway name" value="Formation of Incision Complex in GG-NER"/>
</dbReference>
<dbReference type="Reactome" id="R-HSA-983168">
    <property type="pathway name" value="Antigen processing: Ubiquitination &amp; Proteasome degradation"/>
</dbReference>
<dbReference type="SignaLink" id="Q6ZNA4"/>
<dbReference type="SIGNOR" id="Q6ZNA4"/>
<dbReference type="UniPathway" id="UPA00143"/>
<dbReference type="BioGRID-ORCS" id="54778">
    <property type="hits" value="18 hits in 1208 CRISPR screens"/>
</dbReference>
<dbReference type="ChiTaRS" id="RNF111">
    <property type="organism name" value="human"/>
</dbReference>
<dbReference type="EvolutionaryTrace" id="Q6ZNA4"/>
<dbReference type="GeneWiki" id="RNF111"/>
<dbReference type="GenomeRNAi" id="54778"/>
<dbReference type="Pharos" id="Q6ZNA4">
    <property type="development level" value="Tbio"/>
</dbReference>
<dbReference type="PRO" id="PR:Q6ZNA4"/>
<dbReference type="Proteomes" id="UP000005640">
    <property type="component" value="Chromosome 15"/>
</dbReference>
<dbReference type="RNAct" id="Q6ZNA4">
    <property type="molecule type" value="protein"/>
</dbReference>
<dbReference type="Bgee" id="ENSG00000157450">
    <property type="expression patterns" value="Expressed in secondary oocyte and 201 other cell types or tissues"/>
</dbReference>
<dbReference type="ExpressionAtlas" id="Q6ZNA4">
    <property type="expression patterns" value="baseline and differential"/>
</dbReference>
<dbReference type="GO" id="GO:0005737">
    <property type="term" value="C:cytoplasm"/>
    <property type="evidence" value="ECO:0000318"/>
    <property type="project" value="GO_Central"/>
</dbReference>
<dbReference type="GO" id="GO:0005829">
    <property type="term" value="C:cytosol"/>
    <property type="evidence" value="ECO:0000314"/>
    <property type="project" value="HPA"/>
</dbReference>
<dbReference type="GO" id="GO:0005654">
    <property type="term" value="C:nucleoplasm"/>
    <property type="evidence" value="ECO:0000314"/>
    <property type="project" value="HPA"/>
</dbReference>
<dbReference type="GO" id="GO:0005634">
    <property type="term" value="C:nucleus"/>
    <property type="evidence" value="ECO:0000318"/>
    <property type="project" value="GO_Central"/>
</dbReference>
<dbReference type="GO" id="GO:0016605">
    <property type="term" value="C:PML body"/>
    <property type="evidence" value="ECO:0007669"/>
    <property type="project" value="UniProtKB-SubCell"/>
</dbReference>
<dbReference type="GO" id="GO:0032991">
    <property type="term" value="C:protein-containing complex"/>
    <property type="evidence" value="ECO:0007669"/>
    <property type="project" value="Ensembl"/>
</dbReference>
<dbReference type="GO" id="GO:0046332">
    <property type="term" value="F:SMAD binding"/>
    <property type="evidence" value="ECO:0000318"/>
    <property type="project" value="GO_Central"/>
</dbReference>
<dbReference type="GO" id="GO:0032184">
    <property type="term" value="F:SUMO polymer binding"/>
    <property type="evidence" value="ECO:0000314"/>
    <property type="project" value="UniProtKB"/>
</dbReference>
<dbReference type="GO" id="GO:0061630">
    <property type="term" value="F:ubiquitin protein ligase activity"/>
    <property type="evidence" value="ECO:0000315"/>
    <property type="project" value="BHF-UCL"/>
</dbReference>
<dbReference type="GO" id="GO:0008270">
    <property type="term" value="F:zinc ion binding"/>
    <property type="evidence" value="ECO:0007669"/>
    <property type="project" value="UniProtKB-KW"/>
</dbReference>
<dbReference type="GO" id="GO:0070911">
    <property type="term" value="P:global genome nucleotide-excision repair"/>
    <property type="evidence" value="ECO:0000304"/>
    <property type="project" value="Reactome"/>
</dbReference>
<dbReference type="GO" id="GO:0007389">
    <property type="term" value="P:pattern specification process"/>
    <property type="evidence" value="ECO:0007669"/>
    <property type="project" value="Ensembl"/>
</dbReference>
<dbReference type="GO" id="GO:0031398">
    <property type="term" value="P:positive regulation of protein ubiquitination"/>
    <property type="evidence" value="ECO:0007669"/>
    <property type="project" value="Ensembl"/>
</dbReference>
<dbReference type="GO" id="GO:0030511">
    <property type="term" value="P:positive regulation of transforming growth factor beta receptor signaling pathway"/>
    <property type="evidence" value="ECO:0000318"/>
    <property type="project" value="GO_Central"/>
</dbReference>
<dbReference type="GO" id="GO:0000209">
    <property type="term" value="P:protein polyubiquitination"/>
    <property type="evidence" value="ECO:0007669"/>
    <property type="project" value="Ensembl"/>
</dbReference>
<dbReference type="GO" id="GO:0016567">
    <property type="term" value="P:protein ubiquitination"/>
    <property type="evidence" value="ECO:0000315"/>
    <property type="project" value="BHF-UCL"/>
</dbReference>
<dbReference type="GO" id="GO:0006511">
    <property type="term" value="P:ubiquitin-dependent protein catabolic process"/>
    <property type="evidence" value="ECO:0000318"/>
    <property type="project" value="GO_Central"/>
</dbReference>
<dbReference type="CDD" id="cd16681">
    <property type="entry name" value="RING-H2_RNF111"/>
    <property type="match status" value="1"/>
</dbReference>
<dbReference type="FunFam" id="3.30.40.10:FF:000165">
    <property type="entry name" value="E3 ubiquitin-protein ligase Arkadia isoform X1"/>
    <property type="match status" value="1"/>
</dbReference>
<dbReference type="Gene3D" id="3.30.40.10">
    <property type="entry name" value="Zinc/RING finger domain, C3HC4 (zinc finger)"/>
    <property type="match status" value="1"/>
</dbReference>
<dbReference type="InterPro" id="IPR029306">
    <property type="entry name" value="RNF111_N"/>
</dbReference>
<dbReference type="InterPro" id="IPR001841">
    <property type="entry name" value="Znf_RING"/>
</dbReference>
<dbReference type="InterPro" id="IPR013083">
    <property type="entry name" value="Znf_RING/FYVE/PHD"/>
</dbReference>
<dbReference type="InterPro" id="IPR051073">
    <property type="entry name" value="ZNRF3_Arkadia_E3_ligases"/>
</dbReference>
<dbReference type="PANTHER" id="PTHR16200">
    <property type="entry name" value="RING ZINC FINGER"/>
    <property type="match status" value="1"/>
</dbReference>
<dbReference type="Pfam" id="PF15303">
    <property type="entry name" value="RNF111_N"/>
    <property type="match status" value="1"/>
</dbReference>
<dbReference type="Pfam" id="PF13639">
    <property type="entry name" value="zf-RING_2"/>
    <property type="match status" value="1"/>
</dbReference>
<dbReference type="SMART" id="SM00184">
    <property type="entry name" value="RING"/>
    <property type="match status" value="1"/>
</dbReference>
<dbReference type="SUPFAM" id="SSF57850">
    <property type="entry name" value="RING/U-box"/>
    <property type="match status" value="1"/>
</dbReference>
<dbReference type="PROSITE" id="PS50089">
    <property type="entry name" value="ZF_RING_2"/>
    <property type="match status" value="1"/>
</dbReference>
<gene>
    <name evidence="22" type="primary">RNF111</name>
</gene>
<sequence length="994" mass="108862">MSQWTPEYNELYTLKVDMKSEIPSDAPKTQESLKGILLHPEPIGAAKSFPAGVEMINSKVGNEFSHLCDDSQKQEKEMNGNQQEQEKSLVVRKKRKSQQAGPSYVQNCVKENQGILGLRQHLGTPSDEDNDSSFSDCLSSPSSSLHFGDSDTVTSDEDKEVSVRHSQTILNAKSRSHSARSHKWPRTETESVSGLLMKRPCLHGSSLRRLPCRKRFVKNNSSQRTQKQKERILMQRKKREVLARRKYALLPSSSSSSENDLSSESSSSSSTEGEEDLFVSASENHQNNPAVPSGSIDEDVVVIEASSTPQVTANEEINVTSTDSEVEIVTVGESYRSRSTLGHSRSHWSQGSSSHASRPQEPRNRSRISTVIQPLRQNAAEVVDLTVDEDEPTVVPTTSARMESQATSASINNSNPSTSEQASDTASAVTSSQPSTVSETSATLTSNSTTGTSIGDDSRRTTSSAVTETGPPAMPRLPSCCPQHSPCGGSSQNHHALGHPHTSCFQQHGHHFQHHHHHHHTPHPAVPVSPSFSDPACPVERPPQVQAPCGANSSSGTSYHEQQALPVDLSNSGIRSHGSGSFHGASAFDPCCPVSSSRAAIFGHQAAAAAPSQPLSSIDGYGSSMVAQPQPQPPPQPSLSSCRHYMPPPYASLTRPLHHQASACPHSHGNPPPQTQPPPQVDYVIPHPVHAFHSQISSHATSHPVAPPPPTHLASTAAPIPQHLPPTHQPISHHIPATAPPAQRLHPHEVMQRMEVQRRRMMQHPTRAHERPPPHPHRMHPNYGHGHHIHVPQTMSSHPRQAPERSAWELGIEAGVTAATYTPGALHPHLAHYHAPPRLHHLQLGALPLMVPDMAGYPHIRYISSGLDGTSFRGPFRGNFEELIHLEERLGNVNRGASQGTIERCTYPHKYKKVTTDWFSQRKLHCKQDGEEGTEEDTEEKCTICLSILEEGEDVRRLPCMHLFHQVCVDQWLITNKKCPICRVDIEAQLPSES</sequence>
<feature type="chain" id="PRO_0000280690" description="E3 ubiquitin-protein ligase Arkadia">
    <location>
        <begin position="1"/>
        <end position="994"/>
    </location>
</feature>
<feature type="zinc finger region" description="RING-type; atypical" evidence="3">
    <location>
        <begin position="942"/>
        <end position="983"/>
    </location>
</feature>
<feature type="region of interest" description="Disordered" evidence="4">
    <location>
        <begin position="66"/>
        <end position="106"/>
    </location>
</feature>
<feature type="region of interest" description="Disordered" evidence="4">
    <location>
        <begin position="120"/>
        <end position="191"/>
    </location>
</feature>
<feature type="region of interest" description="Disordered" evidence="4">
    <location>
        <begin position="212"/>
        <end position="277"/>
    </location>
</feature>
<feature type="region of interest" description="Interaction with AXIN1" evidence="8">
    <location>
        <begin position="241"/>
        <end position="404"/>
    </location>
</feature>
<feature type="region of interest" description="Disordered" evidence="4">
    <location>
        <begin position="337"/>
        <end position="371"/>
    </location>
</feature>
<feature type="region of interest" description="Disordered" evidence="4">
    <location>
        <begin position="388"/>
        <end position="476"/>
    </location>
</feature>
<feature type="region of interest" description="Disordered" evidence="4">
    <location>
        <begin position="508"/>
        <end position="537"/>
    </location>
</feature>
<feature type="region of interest" description="Disordered" evidence="4">
    <location>
        <begin position="610"/>
        <end position="684"/>
    </location>
</feature>
<feature type="region of interest" description="Disordered" evidence="4">
    <location>
        <begin position="696"/>
        <end position="742"/>
    </location>
</feature>
<feature type="region of interest" description="Ubiquitin binding" evidence="1">
    <location>
        <begin position="907"/>
        <end position="909"/>
    </location>
</feature>
<feature type="region of interest" description="Ubiquitin binding" evidence="1">
    <location>
        <begin position="957"/>
        <end position="961"/>
    </location>
</feature>
<feature type="short sequence motif" description="SUMO interaction motif 1 (SIM)" evidence="12 13">
    <location>
        <begin position="300"/>
        <end position="304"/>
    </location>
</feature>
<feature type="short sequence motif" description="SUMO interaction motif 2 (SIM)" evidence="12 13">
    <location>
        <begin position="325"/>
        <end position="331"/>
    </location>
</feature>
<feature type="short sequence motif" description="SUMO interaction motif 3 (SIM)" evidence="12 13">
    <location>
        <begin position="382"/>
        <end position="386"/>
    </location>
</feature>
<feature type="compositionally biased region" description="Basic and acidic residues" evidence="4">
    <location>
        <begin position="66"/>
        <end position="89"/>
    </location>
</feature>
<feature type="compositionally biased region" description="Low complexity" evidence="4">
    <location>
        <begin position="132"/>
        <end position="151"/>
    </location>
</feature>
<feature type="compositionally biased region" description="Polar residues" evidence="4">
    <location>
        <begin position="164"/>
        <end position="173"/>
    </location>
</feature>
<feature type="compositionally biased region" description="Basic residues" evidence="4">
    <location>
        <begin position="174"/>
        <end position="184"/>
    </location>
</feature>
<feature type="compositionally biased region" description="Basic residues" evidence="4">
    <location>
        <begin position="234"/>
        <end position="247"/>
    </location>
</feature>
<feature type="compositionally biased region" description="Low complexity" evidence="4">
    <location>
        <begin position="252"/>
        <end position="271"/>
    </location>
</feature>
<feature type="compositionally biased region" description="Low complexity" evidence="4">
    <location>
        <begin position="347"/>
        <end position="357"/>
    </location>
</feature>
<feature type="compositionally biased region" description="Polar residues" evidence="4">
    <location>
        <begin position="395"/>
        <end position="467"/>
    </location>
</feature>
<feature type="compositionally biased region" description="Basic residues" evidence="4">
    <location>
        <begin position="508"/>
        <end position="522"/>
    </location>
</feature>
<feature type="compositionally biased region" description="Pro residues" evidence="4">
    <location>
        <begin position="670"/>
        <end position="680"/>
    </location>
</feature>
<feature type="binding site" evidence="1">
    <location>
        <position position="942"/>
    </location>
    <ligand>
        <name>Zn(2+)</name>
        <dbReference type="ChEBI" id="CHEBI:29105"/>
    </ligand>
</feature>
<feature type="binding site" evidence="1">
    <location>
        <position position="945"/>
    </location>
    <ligand>
        <name>Zn(2+)</name>
        <dbReference type="ChEBI" id="CHEBI:29105"/>
    </ligand>
</feature>
<feature type="binding site" evidence="1">
    <location>
        <position position="965"/>
    </location>
    <ligand>
        <name>Zn(2+)</name>
        <dbReference type="ChEBI" id="CHEBI:29105"/>
    </ligand>
</feature>
<feature type="binding site" evidence="1">
    <location>
        <position position="968"/>
    </location>
    <ligand>
        <name>Zn(2+)</name>
        <dbReference type="ChEBI" id="CHEBI:29105"/>
    </ligand>
</feature>
<feature type="cross-link" description="Glycyl lysine isopeptide (Lys-Gly) (interchain with G-Cter in SUMO2)" evidence="23 24">
    <location>
        <position position="19"/>
    </location>
</feature>
<feature type="cross-link" description="Glycyl lysine isopeptide (Lys-Gly) (interchain with G-Cter in SUMO2)" evidence="24">
    <location>
        <position position="28"/>
    </location>
</feature>
<feature type="cross-link" description="Glycyl lysine isopeptide (Lys-Gly) (interchain with G-Cter in SUMO2)" evidence="24">
    <location>
        <position position="34"/>
    </location>
</feature>
<feature type="cross-link" description="Glycyl lysine isopeptide (Lys-Gly) (interchain with G-Cter in SUMO2)" evidence="24">
    <location>
        <position position="47"/>
    </location>
</feature>
<feature type="cross-link" description="Glycyl lysine isopeptide (Lys-Gly) (interchain with G-Cter in SUMO2)" evidence="24">
    <location>
        <position position="59"/>
    </location>
</feature>
<feature type="cross-link" description="Glycyl lysine isopeptide (Lys-Gly) (interchain with G-Cter in SUMO2)" evidence="24">
    <location>
        <position position="73"/>
    </location>
</feature>
<feature type="cross-link" description="Glycyl lysine isopeptide (Lys-Gly) (interchain with G-Cter in SUMO2)" evidence="24">
    <location>
        <position position="87"/>
    </location>
</feature>
<feature type="cross-link" description="Glycyl lysine isopeptide (Lys-Gly) (interchain with G-Cter in SUMO2)" evidence="24">
    <location>
        <position position="96"/>
    </location>
</feature>
<feature type="cross-link" description="Glycyl lysine isopeptide (Lys-Gly) (interchain with G-Cter in SUMO2)" evidence="24">
    <location>
        <position position="110"/>
    </location>
</feature>
<feature type="cross-link" description="Glycyl lysine isopeptide (Lys-Gly) (interchain with G-Cter in SUMO2)" evidence="24">
    <location>
        <position position="173"/>
    </location>
</feature>
<feature type="cross-link" description="Glycyl lysine isopeptide (Lys-Gly) (interchain with G-Cter in SUMO2)" evidence="24">
    <location>
        <position position="198"/>
    </location>
</feature>
<feature type="cross-link" description="Glycyl lysine isopeptide (Lys-Gly) (interchain with G-Cter in SUMO2)" evidence="24">
    <location>
        <position position="218"/>
    </location>
</feature>
<feature type="cross-link" description="Glycyl lysine isopeptide (Lys-Gly) (interchain with G-Cter in SUMO2)" evidence="24">
    <location>
        <position position="923"/>
    </location>
</feature>
<feature type="cross-link" description="Glycyl lysine isopeptide (Lys-Gly) (interchain with G-Cter in SUMO2)" evidence="24">
    <location>
        <position position="927"/>
    </location>
</feature>
<feature type="splice variant" id="VSP_023840" description="In isoform 3 and isoform 4." evidence="15 17">
    <original>T</original>
    <variation>TGLFVFCVSR</variation>
    <location>
        <position position="766"/>
    </location>
</feature>
<feature type="splice variant" id="VSP_023841" description="In isoform 2 and isoform 4." evidence="16 17">
    <location>
        <begin position="914"/>
        <end position="921"/>
    </location>
</feature>
<feature type="sequence variant" id="VAR_031185" description="In dbSNP:rs2899642." evidence="6 7 10">
    <original>N</original>
    <variation>K</variation>
    <location>
        <position position="9"/>
    </location>
</feature>
<feature type="sequence variant" id="VAR_057216" description="In dbSNP:rs34086812.">
    <original>A</original>
    <variation>T</variation>
    <location>
        <position position="718"/>
    </location>
</feature>
<feature type="mutagenesis site" description="Abolishes binding to sumoylated proteins and ubiquitination and degradation of XPC; when associated with 326-A--A-329 and 382-A--A-385." evidence="13">
    <original>VVVI</original>
    <variation>AAAA</variation>
    <variation>AVAA</variation>
    <location>
        <begin position="300"/>
        <end position="303"/>
    </location>
</feature>
<feature type="mutagenesis site" description="Abolishes binding to sumoylated proteins and ubiquitination and degradation of XPC; when associated with 300-A--A-303 and 382-A--A-385." evidence="13">
    <original>VEIV</original>
    <variation>AAAA</variation>
    <variation>AEAA</variation>
    <location>
        <begin position="326"/>
        <end position="329"/>
    </location>
</feature>
<feature type="mutagenesis site" description="Abolishes binding to sumoylated proteins and ubiquitination and degradation of XPC; when associated with 300-A--A-303 and 326-A--A-329." evidence="13">
    <original>VVDL</original>
    <variation>AAAA</variation>
    <variation>AADA</variation>
    <location>
        <begin position="382"/>
        <end position="385"/>
    </location>
</feature>
<feature type="mutagenesis site" description="Abolishes SUMO binding." evidence="12">
    <original>V</original>
    <variation>A</variation>
    <location>
        <position position="382"/>
    </location>
</feature>
<feature type="mutagenesis site" description="Loss of affinity to SUMO1 and SUMO2." evidence="12">
    <original>V</original>
    <variation>L</variation>
    <location>
        <position position="382"/>
    </location>
</feature>
<feature type="mutagenesis site" description="No loss of affinity toward SUMO1 and SUMO2." evidence="12">
    <original>V</original>
    <variation>Y</variation>
    <location>
        <position position="382"/>
    </location>
</feature>
<feature type="mutagenesis site" description="Abolishes SUMO binding." evidence="12">
    <original>V</original>
    <variation>A</variation>
    <location>
        <position position="383"/>
    </location>
</feature>
<feature type="mutagenesis site" description="No loss of affinity toward SUMO1 and SUMO2." evidence="12">
    <original>V</original>
    <variation>I</variation>
    <location>
        <position position="383"/>
    </location>
</feature>
<feature type="mutagenesis site" description="Abolishes SUMO binding." evidence="12">
    <original>D</original>
    <variation>A</variation>
    <location>
        <position position="384"/>
    </location>
</feature>
<feature type="mutagenesis site" description="Loss of affinity to SUMO1 and SUMO2." evidence="12">
    <original>D</original>
    <variation>E</variation>
    <location>
        <position position="384"/>
    </location>
</feature>
<feature type="mutagenesis site" description="Loss of affinity to SUMO1 and SUMO2." evidence="12">
    <original>D</original>
    <variation>N</variation>
    <location>
        <position position="384"/>
    </location>
</feature>
<feature type="mutagenesis site" description="Abolishes SUMO binding." evidence="12">
    <original>L</original>
    <variation>A</variation>
    <location>
        <position position="385"/>
    </location>
</feature>
<feature type="mutagenesis site" description="Loss of affinity to SUMO1 and SUMO2." evidence="12">
    <original>L</original>
    <variation>I</variation>
    <location>
        <position position="385"/>
    </location>
</feature>
<feature type="mutagenesis site" description="Abolishes SUMO binding." evidence="12">
    <original>T</original>
    <variation>A</variation>
    <location>
        <position position="386"/>
    </location>
</feature>
<feature type="mutagenesis site" description="Loss of affinity to SUMO1 and SUMO2." evidence="12">
    <original>T</original>
    <variation>S</variation>
    <location>
        <position position="386"/>
    </location>
</feature>
<feature type="mutagenesis site" description="Loss of affinity to SUMO1 and SUMO2." evidence="12">
    <original>T</original>
    <variation>V</variation>
    <location>
        <position position="386"/>
    </location>
</feature>
<feature type="sequence conflict" description="In Ref. 2; BX647259." evidence="19" ref="2">
    <original>H</original>
    <variation>R</variation>
    <location>
        <position position="165"/>
    </location>
</feature>
<feature type="sequence conflict" description="In Ref. 2; CAD98031." evidence="19" ref="2">
    <original>A</original>
    <variation>E</variation>
    <location>
        <position position="473"/>
    </location>
</feature>
<feature type="sequence conflict" description="In Ref. 3; AAH60862/AAH20984." evidence="19" ref="3">
    <location>
        <position position="562"/>
    </location>
</feature>
<feature type="sequence conflict" description="In Ref. 2; BX647259." evidence="19" ref="2">
    <original>M</original>
    <variation>T</variation>
    <location>
        <position position="625"/>
    </location>
</feature>
<feature type="sequence conflict" description="In Ref. 2; BX647259." evidence="19" ref="2">
    <original>T</original>
    <variation>I</variation>
    <location>
        <position position="738"/>
    </location>
</feature>
<feature type="sequence conflict" description="In Ref. 2; CAD98031." evidence="19" ref="2">
    <original>E</original>
    <variation>G</variation>
    <location>
        <position position="809"/>
    </location>
</feature>
<feature type="sequence conflict" description="In Ref. 2; CAD98031." evidence="19" ref="2">
    <original>E</original>
    <variation>G</variation>
    <location>
        <position position="931"/>
    </location>
</feature>
<feature type="sequence conflict" description="In Ref. 2; BX647259." evidence="19" ref="2">
    <original>T</original>
    <variation>A</variation>
    <location>
        <position position="938"/>
    </location>
</feature>
<feature type="sequence conflict" description="In Ref. 1; BAD18471." evidence="19" ref="1">
    <original>I</original>
    <variation>V</variation>
    <location>
        <position position="974"/>
    </location>
</feature>
<feature type="strand" evidence="26">
    <location>
        <begin position="938"/>
        <end position="942"/>
    </location>
</feature>
<feature type="turn" evidence="25">
    <location>
        <begin position="943"/>
        <end position="946"/>
    </location>
</feature>
<feature type="strand" evidence="25">
    <location>
        <begin position="951"/>
        <end position="953"/>
    </location>
</feature>
<feature type="strand" evidence="25">
    <location>
        <begin position="955"/>
        <end position="957"/>
    </location>
</feature>
<feature type="turn" evidence="26">
    <location>
        <begin position="959"/>
        <end position="961"/>
    </location>
</feature>
<feature type="strand" evidence="25">
    <location>
        <begin position="963"/>
        <end position="965"/>
    </location>
</feature>
<feature type="helix" evidence="25">
    <location>
        <begin position="966"/>
        <end position="975"/>
    </location>
</feature>
<feature type="turn" evidence="25">
    <location>
        <begin position="980"/>
        <end position="982"/>
    </location>
</feature>
<feature type="strand" evidence="25">
    <location>
        <begin position="984"/>
        <end position="986"/>
    </location>
</feature>
<keyword id="KW-0002">3D-structure</keyword>
<keyword id="KW-0025">Alternative splicing</keyword>
<keyword id="KW-0963">Cytoplasm</keyword>
<keyword id="KW-0217">Developmental protein</keyword>
<keyword id="KW-0227">DNA damage</keyword>
<keyword id="KW-0234">DNA repair</keyword>
<keyword id="KW-1017">Isopeptide bond</keyword>
<keyword id="KW-0479">Metal-binding</keyword>
<keyword id="KW-0539">Nucleus</keyword>
<keyword id="KW-1267">Proteomics identification</keyword>
<keyword id="KW-1185">Reference proteome</keyword>
<keyword id="KW-0808">Transferase</keyword>
<keyword id="KW-0832">Ubl conjugation</keyword>
<keyword id="KW-0833">Ubl conjugation pathway</keyword>
<keyword id="KW-0862">Zinc</keyword>
<keyword id="KW-0863">Zinc-finger</keyword>
<protein>
    <recommendedName>
        <fullName evidence="20">E3 ubiquitin-protein ligase Arkadia</fullName>
        <ecNumber evidence="13">2.3.2.27</ecNumber>
    </recommendedName>
    <alternativeName>
        <fullName evidence="22">RING finger protein 111</fullName>
        <shortName evidence="18">hRNF111</shortName>
    </alternativeName>
    <alternativeName>
        <fullName evidence="19">RING-type E3 ubiquitin transferase Arkadia</fullName>
    </alternativeName>
</protein>
<comment type="function">
    <text evidence="2 5 8 9 11 13 14">E3 ubiquitin-protein ligase (PubMed:26656854). Required for mesoderm patterning during embryonic development (By similarity). Acts as an enhancer of the transcriptional responses of the SMAD2/SMAD3 effectors, which are activated downstream of BMP (PubMed:14657019, PubMed:16601693). Acts by mediating ubiquitination and degradation of SMAD inhibitors such as SMAD7, inducing their proteasomal degradation and thereby enhancing the transcriptional activity of TGF-beta and BMP (PubMed:14657019, PubMed:16601693). In addition to enhance transcription of SMAD2/SMAD3 effectors, also regulates their turnover by mediating their ubiquitination and subsequent degradation, coupling their activation with degradation, thereby ensuring that only effectors 'in use' are degraded (By similarity). Activates SMAD3/SMAD4-dependent transcription by triggering signal-induced degradation of SNON isoform of SKIL (PubMed:17591695). Associates with UBE2D2 as an E2 enzyme (PubMed:22411132). Specifically binds polysumoylated chains via SUMO interaction motifs (SIMs) and mediates ubiquitination of sumoylated substrates (PubMed:23751493). Catalyzes 'Lys-63'-linked ubiquitination of sumoylated XPC in response to UV irradiation, promoting nucleotide excision repair (PubMed:23751493). Mediates ubiquitination and degradation of sumoylated PML (By similarity). The regulation of the BMP-SMAD signaling is however independent of sumoylation and is not dependent of SUMO interaction motifs (SIMs) (By similarity).</text>
</comment>
<comment type="catalytic activity">
    <reaction evidence="13">
        <text>S-ubiquitinyl-[E2 ubiquitin-conjugating enzyme]-L-cysteine + [acceptor protein]-L-lysine = [E2 ubiquitin-conjugating enzyme]-L-cysteine + N(6)-ubiquitinyl-[acceptor protein]-L-lysine.</text>
        <dbReference type="EC" id="2.3.2.27"/>
    </reaction>
</comment>
<comment type="activity regulation">
    <text evidence="1">Binds free ubiquitin non-covalently via its RING-type zinc finger. Ubiquitin-binding leads to enhance the E3 ubiquitin-protein ligase activity by stabilizing the ubiquitin-conjugating enzyme E2 (donor ubiquitin) in the 'closed' conformation and activating ubiquitin transfer.</text>
</comment>
<comment type="pathway">
    <text evidence="5 8 9 11 13 14">Protein modification; protein ubiquitination.</text>
</comment>
<comment type="subunit">
    <text evidence="2 8 9 12 14">Monomer (PubMed:26656854). Interacts with SMAD6, SMAD7, AXIN1, AXIN2 and SKIL isoform SNON (PubMed:16601693, PubMed:17591695). Interacts with (phosphorylated) SMAD2 and SMAD3 (By similarity). Part of a complex containing RNF111, AXIN1 and SMAD7 (PubMed:16601693). Interacts (via SIM domains) with SUMO1 and SUMO2 (PubMed:23086935).</text>
</comment>
<comment type="interaction">
    <interactant intactId="EBI-2129175">
        <id>Q6ZNA4</id>
    </interactant>
    <interactant intactId="EBI-710484">
        <id>O15169</id>
        <label>AXIN1</label>
    </interactant>
    <organismsDiffer>false</organismsDiffer>
    <experiments>2</experiments>
</comment>
<comment type="interaction">
    <interactant intactId="EBI-2129175">
        <id>Q6ZNA4</id>
    </interactant>
    <interactant intactId="EBI-347804">
        <id>P68400</id>
        <label>CSNK2A1</label>
    </interactant>
    <organismsDiffer>false</organismsDiffer>
    <experiments>7</experiments>
</comment>
<comment type="interaction">
    <interactant intactId="EBI-2129175">
        <id>Q6ZNA4</id>
    </interactant>
    <interactant intactId="EBI-2949647">
        <id>Q8WWZ3</id>
        <label>EDARADD</label>
    </interactant>
    <organismsDiffer>false</organismsDiffer>
    <experiments>3</experiments>
</comment>
<comment type="interaction">
    <interactant intactId="EBI-2129175">
        <id>Q6ZNA4</id>
    </interactant>
    <interactant intactId="EBI-3958099">
        <id>P26371</id>
        <label>KRTAP5-9</label>
    </interactant>
    <organismsDiffer>false</organismsDiffer>
    <experiments>5</experiments>
</comment>
<comment type="interaction">
    <interactant intactId="EBI-2129175">
        <id>Q6ZNA4</id>
    </interactant>
    <interactant intactId="EBI-10246358">
        <id>Q5TA78</id>
        <label>LCE4A</label>
    </interactant>
    <organismsDiffer>false</organismsDiffer>
    <experiments>3</experiments>
</comment>
<comment type="interaction">
    <interactant intactId="EBI-2129175">
        <id>Q6ZNA4</id>
    </interactant>
    <interactant intactId="EBI-743540">
        <id>P51668</id>
        <label>UBE2D1</label>
    </interactant>
    <organismsDiffer>false</organismsDiffer>
    <experiments>5</experiments>
</comment>
<comment type="interaction">
    <interactant intactId="EBI-2129175">
        <id>Q6ZNA4</id>
    </interactant>
    <interactant intactId="EBI-348268">
        <id>P61077</id>
        <label>UBE2D3</label>
    </interactant>
    <organismsDiffer>false</organismsDiffer>
    <experiments>5</experiments>
</comment>
<comment type="interaction">
    <interactant intactId="EBI-2129175">
        <id>Q6ZNA4</id>
    </interactant>
    <interactant intactId="EBI-80168">
        <id>P63279</id>
        <label>UBE2I</label>
    </interactant>
    <organismsDiffer>false</organismsDiffer>
    <experiments>5</experiments>
</comment>
<comment type="interaction">
    <interactant intactId="EBI-2129175">
        <id>Q6ZNA4</id>
    </interactant>
    <interactant intactId="EBI-1050671">
        <id>Q13404</id>
        <label>UBE2V1</label>
    </interactant>
    <organismsDiffer>false</organismsDiffer>
    <experiments>2</experiments>
</comment>
<comment type="interaction">
    <interactant intactId="EBI-2129175">
        <id>Q6ZNA4</id>
    </interactant>
    <interactant intactId="EBI-10175581">
        <id>B2R8Y4</id>
    </interactant>
    <organismsDiffer>false</organismsDiffer>
    <experiments>3</experiments>
</comment>
<comment type="interaction">
    <interactant intactId="EBI-21535400">
        <id>Q6ZNA4-2</id>
    </interactant>
    <interactant intactId="EBI-1222467">
        <id>P02649</id>
        <label>APOE</label>
    </interactant>
    <organismsDiffer>false</organismsDiffer>
    <experiments>3</experiments>
</comment>
<comment type="interaction">
    <interactant intactId="EBI-21535400">
        <id>Q6ZNA4-2</id>
    </interactant>
    <interactant intactId="EBI-77613">
        <id>P05067</id>
        <label>APP</label>
    </interactant>
    <organismsDiffer>false</organismsDiffer>
    <experiments>3</experiments>
</comment>
<comment type="interaction">
    <interactant intactId="EBI-21535400">
        <id>Q6ZNA4-2</id>
    </interactant>
    <interactant intactId="EBI-17264467">
        <id>P05067-2</id>
        <label>APP</label>
    </interactant>
    <organismsDiffer>false</organismsDiffer>
    <experiments>3</experiments>
</comment>
<comment type="interaction">
    <interactant intactId="EBI-21535400">
        <id>Q6ZNA4-2</id>
    </interactant>
    <interactant intactId="EBI-930964">
        <id>P54253</id>
        <label>ATXN1</label>
    </interactant>
    <organismsDiffer>false</organismsDiffer>
    <experiments>6</experiments>
</comment>
<comment type="interaction">
    <interactant intactId="EBI-21535400">
        <id>Q6ZNA4-2</id>
    </interactant>
    <interactant intactId="EBI-946046">
        <id>P54252</id>
        <label>ATXN3</label>
    </interactant>
    <organismsDiffer>false</organismsDiffer>
    <experiments>6</experiments>
</comment>
<comment type="interaction">
    <interactant intactId="EBI-21535400">
        <id>Q6ZNA4-2</id>
    </interactant>
    <interactant intactId="EBI-21603100">
        <id>P26378-2</id>
        <label>ELAVL4</label>
    </interactant>
    <organismsDiffer>false</organismsDiffer>
    <experiments>3</experiments>
</comment>
<comment type="interaction">
    <interactant intactId="EBI-21535400">
        <id>Q6ZNA4-2</id>
    </interactant>
    <interactant intactId="EBI-466029">
        <id>P42858</id>
        <label>HTT</label>
    </interactant>
    <organismsDiffer>false</organismsDiffer>
    <experiments>18</experiments>
</comment>
<comment type="interaction">
    <interactant intactId="EBI-21535400">
        <id>Q6ZNA4-2</id>
    </interactant>
    <interactant intactId="EBI-716486">
        <id>Q92597</id>
        <label>NDRG1</label>
    </interactant>
    <organismsDiffer>false</organismsDiffer>
    <experiments>3</experiments>
</comment>
<comment type="interaction">
    <interactant intactId="EBI-21535400">
        <id>Q6ZNA4-2</id>
    </interactant>
    <interactant intactId="EBI-748974">
        <id>Q96CV9</id>
        <label>OPTN</label>
    </interactant>
    <organismsDiffer>false</organismsDiffer>
    <experiments>3</experiments>
</comment>
<comment type="interaction">
    <interactant intactId="EBI-21535400">
        <id>Q6ZNA4-2</id>
    </interactant>
    <interactant intactId="EBI-1164361">
        <id>Q99497</id>
        <label>PARK7</label>
    </interactant>
    <organismsDiffer>false</organismsDiffer>
    <experiments>3</experiments>
</comment>
<comment type="interaction">
    <interactant intactId="EBI-21535400">
        <id>Q6ZNA4-2</id>
    </interactant>
    <interactant intactId="EBI-21251460">
        <id>O60260-5</id>
        <label>PRKN</label>
    </interactant>
    <organismsDiffer>false</organismsDiffer>
    <experiments>6</experiments>
</comment>
<comment type="interaction">
    <interactant intactId="EBI-21535400">
        <id>Q6ZNA4-2</id>
    </interactant>
    <interactant intactId="EBI-11047108">
        <id>P49768-2</id>
        <label>PSEN1</label>
    </interactant>
    <organismsDiffer>false</organismsDiffer>
    <experiments>6</experiments>
</comment>
<comment type="interaction">
    <interactant intactId="EBI-21535400">
        <id>Q6ZNA4-2</id>
    </interactant>
    <interactant intactId="EBI-985879">
        <id>P37840</id>
        <label>SNCA</label>
    </interactant>
    <organismsDiffer>false</organismsDiffer>
    <experiments>3</experiments>
</comment>
<comment type="interaction">
    <interactant intactId="EBI-21535400">
        <id>Q6ZNA4-2</id>
    </interactant>
    <interactant intactId="EBI-990792">
        <id>P00441</id>
        <label>SOD1</label>
    </interactant>
    <organismsDiffer>false</organismsDiffer>
    <experiments>3</experiments>
</comment>
<comment type="interaction">
    <interactant intactId="EBI-21535400">
        <id>Q6ZNA4-2</id>
    </interactant>
    <interactant intactId="EBI-2902553">
        <id>Q9NUW8</id>
        <label>TDP1</label>
    </interactant>
    <organismsDiffer>false</organismsDiffer>
    <experiments>3</experiments>
</comment>
<comment type="interaction">
    <interactant intactId="EBI-21535400">
        <id>Q6ZNA4-2</id>
    </interactant>
    <interactant intactId="EBI-473850">
        <id>P61086</id>
        <label>UBE2K</label>
    </interactant>
    <organismsDiffer>false</organismsDiffer>
    <experiments>3</experiments>
</comment>
<comment type="subcellular location">
    <subcellularLocation>
        <location evidence="8 13">Nucleus</location>
    </subcellularLocation>
    <subcellularLocation>
        <location evidence="8">Cytoplasm</location>
    </subcellularLocation>
    <subcellularLocation>
        <location evidence="2">Nucleus</location>
        <location evidence="2">PML body</location>
    </subcellularLocation>
    <text evidence="8">Upon TGF-beta treatment, translocates from nucleus to cytosol.</text>
</comment>
<comment type="alternative products">
    <event type="alternative splicing"/>
    <isoform>
        <id>Q6ZNA4-1</id>
        <name>1</name>
        <sequence type="displayed"/>
    </isoform>
    <isoform>
        <id>Q6ZNA4-2</id>
        <name>2</name>
        <sequence type="described" ref="VSP_023841"/>
    </isoform>
    <isoform>
        <id>Q6ZNA4-3</id>
        <name>3</name>
        <sequence type="described" ref="VSP_023840"/>
    </isoform>
    <isoform>
        <id>Q6ZNA4-4</id>
        <name>4</name>
        <sequence type="described" ref="VSP_023840 VSP_023841"/>
    </isoform>
</comment>
<comment type="tissue specificity">
    <text evidence="5">Broadly expressed.</text>
</comment>
<comment type="domain">
    <text evidence="12 13">The SUMO interaction motifs (SIMs) mediates the binding to polysumoylated substrate.</text>
</comment>
<comment type="domain">
    <text evidence="1 21">The RING-type zinc finger mediates the E3 ubiquitin-protein ligase activity and binds directly to free ubiquitin (PubMed:26656854). Non-covalent ubiquitin-binding stabilizes the ubiquitin-conjugating enzyme E2 (donor ubiquitin) in the 'closed' conformation and stimulates ubiquitin transfer (By similarity).</text>
</comment>
<comment type="similarity">
    <text evidence="19">Belongs to the Arkadia family.</text>
</comment>
<comment type="sequence caution" evidence="19">
    <conflict type="erroneous initiation">
        <sequence resource="EMBL-CDS" id="AAH10369"/>
    </conflict>
    <text>Truncated N-terminus.</text>
</comment>
<comment type="sequence caution" evidence="19">
    <conflict type="erroneous initiation">
        <sequence resource="EMBL-CDS" id="BAC04531"/>
    </conflict>
    <text>Truncated N-terminus.</text>
</comment>
<comment type="sequence caution" evidence="19">
    <conflict type="erroneous initiation">
        <sequence resource="EMBL-CDS" id="BAD18633"/>
    </conflict>
    <text>Truncated N-terminus.</text>
</comment>
<name>RN111_HUMAN</name>
<proteinExistence type="evidence at protein level"/>
<reference key="1">
    <citation type="journal article" date="2004" name="Nat. Genet.">
        <title>Complete sequencing and characterization of 21,243 full-length human cDNAs.</title>
        <authorList>
            <person name="Ota T."/>
            <person name="Suzuki Y."/>
            <person name="Nishikawa T."/>
            <person name="Otsuki T."/>
            <person name="Sugiyama T."/>
            <person name="Irie R."/>
            <person name="Wakamatsu A."/>
            <person name="Hayashi K."/>
            <person name="Sato H."/>
            <person name="Nagai K."/>
            <person name="Kimura K."/>
            <person name="Makita H."/>
            <person name="Sekine M."/>
            <person name="Obayashi M."/>
            <person name="Nishi T."/>
            <person name="Shibahara T."/>
            <person name="Tanaka T."/>
            <person name="Ishii S."/>
            <person name="Yamamoto J."/>
            <person name="Saito K."/>
            <person name="Kawai Y."/>
            <person name="Isono Y."/>
            <person name="Nakamura Y."/>
            <person name="Nagahari K."/>
            <person name="Murakami K."/>
            <person name="Yasuda T."/>
            <person name="Iwayanagi T."/>
            <person name="Wagatsuma M."/>
            <person name="Shiratori A."/>
            <person name="Sudo H."/>
            <person name="Hosoiri T."/>
            <person name="Kaku Y."/>
            <person name="Kodaira H."/>
            <person name="Kondo H."/>
            <person name="Sugawara M."/>
            <person name="Takahashi M."/>
            <person name="Kanda K."/>
            <person name="Yokoi T."/>
            <person name="Furuya T."/>
            <person name="Kikkawa E."/>
            <person name="Omura Y."/>
            <person name="Abe K."/>
            <person name="Kamihara K."/>
            <person name="Katsuta N."/>
            <person name="Sato K."/>
            <person name="Tanikawa M."/>
            <person name="Yamazaki M."/>
            <person name="Ninomiya K."/>
            <person name="Ishibashi T."/>
            <person name="Yamashita H."/>
            <person name="Murakawa K."/>
            <person name="Fujimori K."/>
            <person name="Tanai H."/>
            <person name="Kimata M."/>
            <person name="Watanabe M."/>
            <person name="Hiraoka S."/>
            <person name="Chiba Y."/>
            <person name="Ishida S."/>
            <person name="Ono Y."/>
            <person name="Takiguchi S."/>
            <person name="Watanabe S."/>
            <person name="Yosida M."/>
            <person name="Hotuta T."/>
            <person name="Kusano J."/>
            <person name="Kanehori K."/>
            <person name="Takahashi-Fujii A."/>
            <person name="Hara H."/>
            <person name="Tanase T.-O."/>
            <person name="Nomura Y."/>
            <person name="Togiya S."/>
            <person name="Komai F."/>
            <person name="Hara R."/>
            <person name="Takeuchi K."/>
            <person name="Arita M."/>
            <person name="Imose N."/>
            <person name="Musashino K."/>
            <person name="Yuuki H."/>
            <person name="Oshima A."/>
            <person name="Sasaki N."/>
            <person name="Aotsuka S."/>
            <person name="Yoshikawa Y."/>
            <person name="Matsunawa H."/>
            <person name="Ichihara T."/>
            <person name="Shiohata N."/>
            <person name="Sano S."/>
            <person name="Moriya S."/>
            <person name="Momiyama H."/>
            <person name="Satoh N."/>
            <person name="Takami S."/>
            <person name="Terashima Y."/>
            <person name="Suzuki O."/>
            <person name="Nakagawa S."/>
            <person name="Senoh A."/>
            <person name="Mizoguchi H."/>
            <person name="Goto Y."/>
            <person name="Shimizu F."/>
            <person name="Wakebe H."/>
            <person name="Hishigaki H."/>
            <person name="Watanabe T."/>
            <person name="Sugiyama A."/>
            <person name="Takemoto M."/>
            <person name="Kawakami B."/>
            <person name="Yamazaki M."/>
            <person name="Watanabe K."/>
            <person name="Kumagai A."/>
            <person name="Itakura S."/>
            <person name="Fukuzumi Y."/>
            <person name="Fujimori Y."/>
            <person name="Komiyama M."/>
            <person name="Tashiro H."/>
            <person name="Tanigami A."/>
            <person name="Fujiwara T."/>
            <person name="Ono T."/>
            <person name="Yamada K."/>
            <person name="Fujii Y."/>
            <person name="Ozaki K."/>
            <person name="Hirao M."/>
            <person name="Ohmori Y."/>
            <person name="Kawabata A."/>
            <person name="Hikiji T."/>
            <person name="Kobatake N."/>
            <person name="Inagaki H."/>
            <person name="Ikema Y."/>
            <person name="Okamoto S."/>
            <person name="Okitani R."/>
            <person name="Kawakami T."/>
            <person name="Noguchi S."/>
            <person name="Itoh T."/>
            <person name="Shigeta K."/>
            <person name="Senba T."/>
            <person name="Matsumura K."/>
            <person name="Nakajima Y."/>
            <person name="Mizuno T."/>
            <person name="Morinaga M."/>
            <person name="Sasaki M."/>
            <person name="Togashi T."/>
            <person name="Oyama M."/>
            <person name="Hata H."/>
            <person name="Watanabe M."/>
            <person name="Komatsu T."/>
            <person name="Mizushima-Sugano J."/>
            <person name="Satoh T."/>
            <person name="Shirai Y."/>
            <person name="Takahashi Y."/>
            <person name="Nakagawa K."/>
            <person name="Okumura K."/>
            <person name="Nagase T."/>
            <person name="Nomura N."/>
            <person name="Kikuchi H."/>
            <person name="Masuho Y."/>
            <person name="Yamashita R."/>
            <person name="Nakai K."/>
            <person name="Yada T."/>
            <person name="Nakamura Y."/>
            <person name="Ohara O."/>
            <person name="Isogai T."/>
            <person name="Sugano S."/>
        </authorList>
    </citation>
    <scope>NUCLEOTIDE SEQUENCE [LARGE SCALE MRNA] (ISOFORMS 1 AND 3)</scope>
    <scope>VARIANT LYS-9</scope>
    <source>
        <tissue>Thymus</tissue>
        <tissue>Tongue</tissue>
    </source>
</reference>
<reference key="2">
    <citation type="journal article" date="2007" name="BMC Genomics">
        <title>The full-ORF clone resource of the German cDNA consortium.</title>
        <authorList>
            <person name="Bechtel S."/>
            <person name="Rosenfelder H."/>
            <person name="Duda A."/>
            <person name="Schmidt C.P."/>
            <person name="Ernst U."/>
            <person name="Wellenreuther R."/>
            <person name="Mehrle A."/>
            <person name="Schuster C."/>
            <person name="Bahr A."/>
            <person name="Bloecker H."/>
            <person name="Heubner D."/>
            <person name="Hoerlein A."/>
            <person name="Michel G."/>
            <person name="Wedler H."/>
            <person name="Koehrer K."/>
            <person name="Ottenwaelder B."/>
            <person name="Poustka A."/>
            <person name="Wiemann S."/>
            <person name="Schupp I."/>
        </authorList>
    </citation>
    <scope>NUCLEOTIDE SEQUENCE [LARGE SCALE MRNA] (ISOFORMS 2 AND 4)</scope>
    <scope>VARIANT LYS-9</scope>
    <source>
        <tissue>Amygdala</tissue>
        <tissue>Endometrium</tissue>
    </source>
</reference>
<reference key="3">
    <citation type="journal article" date="2006" name="Nature">
        <title>Analysis of the DNA sequence and duplication history of human chromosome 15.</title>
        <authorList>
            <person name="Zody M.C."/>
            <person name="Garber M."/>
            <person name="Sharpe T."/>
            <person name="Young S.K."/>
            <person name="Rowen L."/>
            <person name="O'Neill K."/>
            <person name="Whittaker C.A."/>
            <person name="Kamal M."/>
            <person name="Chang J.L."/>
            <person name="Cuomo C.A."/>
            <person name="Dewar K."/>
            <person name="FitzGerald M.G."/>
            <person name="Kodira C.D."/>
            <person name="Madan A."/>
            <person name="Qin S."/>
            <person name="Yang X."/>
            <person name="Abbasi N."/>
            <person name="Abouelleil A."/>
            <person name="Arachchi H.M."/>
            <person name="Baradarani L."/>
            <person name="Birditt B."/>
            <person name="Bloom S."/>
            <person name="Bloom T."/>
            <person name="Borowsky M.L."/>
            <person name="Burke J."/>
            <person name="Butler J."/>
            <person name="Cook A."/>
            <person name="DeArellano K."/>
            <person name="DeCaprio D."/>
            <person name="Dorris L. III"/>
            <person name="Dors M."/>
            <person name="Eichler E.E."/>
            <person name="Engels R."/>
            <person name="Fahey J."/>
            <person name="Fleetwood P."/>
            <person name="Friedman C."/>
            <person name="Gearin G."/>
            <person name="Hall J.L."/>
            <person name="Hensley G."/>
            <person name="Johnson E."/>
            <person name="Jones C."/>
            <person name="Kamat A."/>
            <person name="Kaur A."/>
            <person name="Locke D.P."/>
            <person name="Madan A."/>
            <person name="Munson G."/>
            <person name="Jaffe D.B."/>
            <person name="Lui A."/>
            <person name="Macdonald P."/>
            <person name="Mauceli E."/>
            <person name="Naylor J.W."/>
            <person name="Nesbitt R."/>
            <person name="Nicol R."/>
            <person name="O'Leary S.B."/>
            <person name="Ratcliffe A."/>
            <person name="Rounsley S."/>
            <person name="She X."/>
            <person name="Sneddon K.M.B."/>
            <person name="Stewart S."/>
            <person name="Sougnez C."/>
            <person name="Stone S.M."/>
            <person name="Topham K."/>
            <person name="Vincent D."/>
            <person name="Wang S."/>
            <person name="Zimmer A.R."/>
            <person name="Birren B.W."/>
            <person name="Hood L."/>
            <person name="Lander E.S."/>
            <person name="Nusbaum C."/>
        </authorList>
    </citation>
    <scope>NUCLEOTIDE SEQUENCE [LARGE SCALE GENOMIC DNA]</scope>
</reference>
<reference key="4">
    <citation type="submission" date="2005-07" db="EMBL/GenBank/DDBJ databases">
        <authorList>
            <person name="Mural R.J."/>
            <person name="Istrail S."/>
            <person name="Sutton G."/>
            <person name="Florea L."/>
            <person name="Halpern A.L."/>
            <person name="Mobarry C.M."/>
            <person name="Lippert R."/>
            <person name="Walenz B."/>
            <person name="Shatkay H."/>
            <person name="Dew I."/>
            <person name="Miller J.R."/>
            <person name="Flanigan M.J."/>
            <person name="Edwards N.J."/>
            <person name="Bolanos R."/>
            <person name="Fasulo D."/>
            <person name="Halldorsson B.V."/>
            <person name="Hannenhalli S."/>
            <person name="Turner R."/>
            <person name="Yooseph S."/>
            <person name="Lu F."/>
            <person name="Nusskern D.R."/>
            <person name="Shue B.C."/>
            <person name="Zheng X.H."/>
            <person name="Zhong F."/>
            <person name="Delcher A.L."/>
            <person name="Huson D.H."/>
            <person name="Kravitz S.A."/>
            <person name="Mouchard L."/>
            <person name="Reinert K."/>
            <person name="Remington K.A."/>
            <person name="Clark A.G."/>
            <person name="Waterman M.S."/>
            <person name="Eichler E.E."/>
            <person name="Adams M.D."/>
            <person name="Hunkapiller M.W."/>
            <person name="Myers E.W."/>
            <person name="Venter J.C."/>
        </authorList>
    </citation>
    <scope>NUCLEOTIDE SEQUENCE [LARGE SCALE GENOMIC DNA]</scope>
</reference>
<reference key="5">
    <citation type="journal article" date="2004" name="Genome Res.">
        <title>The status, quality, and expansion of the NIH full-length cDNA project: the Mammalian Gene Collection (MGC).</title>
        <authorList>
            <consortium name="The MGC Project Team"/>
        </authorList>
    </citation>
    <scope>NUCLEOTIDE SEQUENCE [LARGE SCALE MRNA] (ISOFORM 2)</scope>
    <scope>NUCLEOTIDE SEQUENCE [LARGE SCALE MRNA] OF 553-994 (ISOFORM 1)</scope>
    <scope>VARIANT LYS-9</scope>
    <source>
        <tissue>Brain</tissue>
        <tissue>Colon</tissue>
        <tissue>Placenta</tissue>
    </source>
</reference>
<reference key="6">
    <citation type="journal article" date="2003" name="EMBO J.">
        <title>Arkadia amplifies TGF-beta superfamily signaling through degradation of Smad7.</title>
        <authorList>
            <person name="Koinuma D."/>
            <person name="Shinozaki M."/>
            <person name="Komuro A."/>
            <person name="Goto K."/>
            <person name="Saitoh M."/>
            <person name="Hanyu A."/>
            <person name="Ebina M."/>
            <person name="Nukiwa T."/>
            <person name="Miyazawa K."/>
            <person name="Imamura T."/>
            <person name="Miyazono K."/>
        </authorList>
    </citation>
    <scope>FUNCTION</scope>
    <scope>TISSUE SPECIFICITY</scope>
</reference>
<reference key="7">
    <citation type="journal article" date="2006" name="EMBO J.">
        <title>Axin is a scaffold protein in TGF-beta signaling that promotes degradation of Smad7 by Arkadia.</title>
        <authorList>
            <person name="Liu W."/>
            <person name="Rui H."/>
            <person name="Wang J."/>
            <person name="Lin S."/>
            <person name="He Y."/>
            <person name="Chen M."/>
            <person name="Li Q."/>
            <person name="Ye Z."/>
            <person name="Zhang S."/>
            <person name="Chan S.C."/>
            <person name="Chen Y.-G."/>
            <person name="Han J."/>
            <person name="Lin S.-C."/>
        </authorList>
    </citation>
    <scope>INTERACTION WITH AXIN1 AND AXIN2</scope>
    <scope>IDENTIFICATION IN COMPLEX WITH AXIN1 AND SMAD7</scope>
    <scope>SUBCELLULAR LOCATION</scope>
    <scope>FUNCTION</scope>
</reference>
<reference key="8">
    <citation type="journal article" date="2007" name="Mol. Cell. Biol.">
        <title>Arkadia activates Smad3/Smad4-dependent transcription by triggering signal-induced SnoN degradation.</title>
        <authorList>
            <person name="Levy L."/>
            <person name="Howell M."/>
            <person name="Das D."/>
            <person name="Harkin S."/>
            <person name="Episkopou V."/>
            <person name="Hill C.S."/>
        </authorList>
    </citation>
    <scope>INTERACTION WITH SKIL</scope>
    <scope>FUNCTION</scope>
</reference>
<reference key="9">
    <citation type="journal article" date="2012" name="J. Biol. Chem.">
        <title>PolySUMO-binding proteins identified through a string search.</title>
        <authorList>
            <person name="Sun H."/>
            <person name="Hunter T."/>
        </authorList>
    </citation>
    <scope>IDENTIFICATION OF REPEAT SUMO-INTERACTING MOTIF</scope>
    <scope>DOMAIN</scope>
    <scope>INTERACTION WITH SUMO1 AND SUMO2</scope>
    <scope>MUTAGENESIS OF VAL-382; VAL-383; ASP-384; LEU-385 AND THR-386</scope>
</reference>
<reference key="10">
    <citation type="journal article" date="2013" name="J. Cell Biol.">
        <title>RNF111/Arkadia is a SUMO-targeted ubiquitin ligase that facilitates the DNA damage response.</title>
        <authorList>
            <person name="Poulsen S.L."/>
            <person name="Hansen R.K."/>
            <person name="Wagner S.A."/>
            <person name="van Cuijk L."/>
            <person name="van Belle G.J."/>
            <person name="Streicher W."/>
            <person name="Wikstroem M."/>
            <person name="Choudhary C."/>
            <person name="Houtsmuller A.B."/>
            <person name="Marteijn J.A."/>
            <person name="Bekker-Jensen S."/>
            <person name="Mailand N."/>
        </authorList>
    </citation>
    <scope>FUNCTION</scope>
    <scope>SUBCELLULAR LOCATION</scope>
    <scope>DOMAIN</scope>
    <scope>MUTAGENESIS OF 300-VAL--ILE-303; 326-VAL--VAL-329 AND 382-VAL--LEU-385</scope>
</reference>
<reference key="11">
    <citation type="journal article" date="2015" name="Mol. Cell. Proteomics">
        <title>System-wide analysis of SUMOylation dynamics in response to replication stress reveals novel small ubiquitin-like modified target proteins and acceptor lysines relevant for genome stability.</title>
        <authorList>
            <person name="Xiao Z."/>
            <person name="Chang J.G."/>
            <person name="Hendriks I.A."/>
            <person name="Sigurdsson J.O."/>
            <person name="Olsen J.V."/>
            <person name="Vertegaal A.C."/>
        </authorList>
    </citation>
    <scope>SUMOYLATION [LARGE SCALE ANALYSIS] AT LYS-19</scope>
    <scope>IDENTIFICATION BY MASS SPECTROMETRY [LARGE SCALE ANALYSIS]</scope>
</reference>
<reference key="12">
    <citation type="journal article" date="2016" name="Nat. Struct. Mol. Biol.">
        <title>Secondary ubiquitin-RING docking enhances Arkadia and Ark2C E3 ligase activity.</title>
        <authorList>
            <person name="Wright J.D."/>
            <person name="Mace P.D."/>
            <person name="Day C.L."/>
        </authorList>
    </citation>
    <scope>FUNCTION</scope>
    <scope>SUBUNIT</scope>
    <scope>DOMAIN</scope>
</reference>
<reference key="13">
    <citation type="journal article" date="2017" name="Nat. Struct. Mol. Biol.">
        <title>Site-specific mapping of the human SUMO proteome reveals co-modification with phosphorylation.</title>
        <authorList>
            <person name="Hendriks I.A."/>
            <person name="Lyon D."/>
            <person name="Young C."/>
            <person name="Jensen L.J."/>
            <person name="Vertegaal A.C."/>
            <person name="Nielsen M.L."/>
        </authorList>
    </citation>
    <scope>SUMOYLATION [LARGE SCALE ANALYSIS] AT LYS-19; LYS-28; LYS-34; LYS-47; LYS-59; LYS-73; LYS-87; LYS-96; LYS-110; LYS-173; LYS-198; LYS-218; LYS-923 AND LYS-927</scope>
    <scope>IDENTIFICATION BY MASS SPECTROMETRY [LARGE SCALE ANALYSIS]</scope>
</reference>
<reference key="14">
    <citation type="journal article" date="2012" name="Proteins">
        <title>NMR-based insights into the conformational and interaction properties of Arkadia RING-H2 E3 Ub ligase.</title>
        <authorList>
            <person name="Chasapis C.T."/>
            <person name="Kandias N.G."/>
            <person name="Episkopou V."/>
            <person name="Bentrop D."/>
            <person name="Spyroulias G.A."/>
        </authorList>
    </citation>
    <scope>STRUCTURE BY NMR OF 927-994</scope>
    <scope>FUNCTION</scope>
</reference>